<comment type="function">
    <text evidence="1">Hydrolyzes ribosome-free peptidyl-tRNAs (with 1 or more amino acids incorporated), which drop off the ribosome during protein synthesis, or as a result of ribosome stalling.</text>
</comment>
<comment type="function">
    <text evidence="1">Catalyzes the release of premature peptidyl moieties from peptidyl-tRNA molecules trapped in stalled 50S ribosomal subunits, and thus maintains levels of free tRNAs and 50S ribosomes.</text>
</comment>
<comment type="catalytic activity">
    <reaction evidence="1">
        <text>an N-acyl-L-alpha-aminoacyl-tRNA + H2O = an N-acyl-L-amino acid + a tRNA + H(+)</text>
        <dbReference type="Rhea" id="RHEA:54448"/>
        <dbReference type="Rhea" id="RHEA-COMP:10123"/>
        <dbReference type="Rhea" id="RHEA-COMP:13883"/>
        <dbReference type="ChEBI" id="CHEBI:15377"/>
        <dbReference type="ChEBI" id="CHEBI:15378"/>
        <dbReference type="ChEBI" id="CHEBI:59874"/>
        <dbReference type="ChEBI" id="CHEBI:78442"/>
        <dbReference type="ChEBI" id="CHEBI:138191"/>
        <dbReference type="EC" id="3.1.1.29"/>
    </reaction>
</comment>
<comment type="subunit">
    <text evidence="1">Monomer.</text>
</comment>
<comment type="subcellular location">
    <subcellularLocation>
        <location evidence="1">Cytoplasm</location>
    </subcellularLocation>
</comment>
<comment type="similarity">
    <text evidence="1">Belongs to the PTH family.</text>
</comment>
<gene>
    <name evidence="1" type="primary">pth</name>
    <name type="ordered locus">SUN_2060</name>
</gene>
<name>PTH_SULNB</name>
<dbReference type="EC" id="3.1.1.29" evidence="1"/>
<dbReference type="EMBL" id="AP009179">
    <property type="protein sequence ID" value="BAF73001.1"/>
    <property type="molecule type" value="Genomic_DNA"/>
</dbReference>
<dbReference type="RefSeq" id="WP_012083822.1">
    <property type="nucleotide sequence ID" value="NC_009663.1"/>
</dbReference>
<dbReference type="SMR" id="A6QBZ2"/>
<dbReference type="STRING" id="387093.SUN_2060"/>
<dbReference type="KEGG" id="sun:SUN_2060"/>
<dbReference type="eggNOG" id="COG0193">
    <property type="taxonomic scope" value="Bacteria"/>
</dbReference>
<dbReference type="HOGENOM" id="CLU_062456_4_1_7"/>
<dbReference type="OrthoDB" id="9800507at2"/>
<dbReference type="Proteomes" id="UP000006378">
    <property type="component" value="Chromosome"/>
</dbReference>
<dbReference type="GO" id="GO:0005737">
    <property type="term" value="C:cytoplasm"/>
    <property type="evidence" value="ECO:0007669"/>
    <property type="project" value="UniProtKB-SubCell"/>
</dbReference>
<dbReference type="GO" id="GO:0004045">
    <property type="term" value="F:peptidyl-tRNA hydrolase activity"/>
    <property type="evidence" value="ECO:0007669"/>
    <property type="project" value="UniProtKB-UniRule"/>
</dbReference>
<dbReference type="GO" id="GO:0000049">
    <property type="term" value="F:tRNA binding"/>
    <property type="evidence" value="ECO:0007669"/>
    <property type="project" value="UniProtKB-UniRule"/>
</dbReference>
<dbReference type="GO" id="GO:0006515">
    <property type="term" value="P:protein quality control for misfolded or incompletely synthesized proteins"/>
    <property type="evidence" value="ECO:0007669"/>
    <property type="project" value="UniProtKB-UniRule"/>
</dbReference>
<dbReference type="GO" id="GO:0072344">
    <property type="term" value="P:rescue of stalled ribosome"/>
    <property type="evidence" value="ECO:0007669"/>
    <property type="project" value="UniProtKB-UniRule"/>
</dbReference>
<dbReference type="CDD" id="cd00462">
    <property type="entry name" value="PTH"/>
    <property type="match status" value="1"/>
</dbReference>
<dbReference type="FunFam" id="3.40.50.1470:FF:000001">
    <property type="entry name" value="Peptidyl-tRNA hydrolase"/>
    <property type="match status" value="1"/>
</dbReference>
<dbReference type="Gene3D" id="3.40.50.1470">
    <property type="entry name" value="Peptidyl-tRNA hydrolase"/>
    <property type="match status" value="1"/>
</dbReference>
<dbReference type="HAMAP" id="MF_00083">
    <property type="entry name" value="Pept_tRNA_hydro_bact"/>
    <property type="match status" value="1"/>
</dbReference>
<dbReference type="InterPro" id="IPR001328">
    <property type="entry name" value="Pept_tRNA_hydro"/>
</dbReference>
<dbReference type="InterPro" id="IPR018171">
    <property type="entry name" value="Pept_tRNA_hydro_CS"/>
</dbReference>
<dbReference type="InterPro" id="IPR036416">
    <property type="entry name" value="Pept_tRNA_hydro_sf"/>
</dbReference>
<dbReference type="NCBIfam" id="TIGR00447">
    <property type="entry name" value="pth"/>
    <property type="match status" value="1"/>
</dbReference>
<dbReference type="PANTHER" id="PTHR17224">
    <property type="entry name" value="PEPTIDYL-TRNA HYDROLASE"/>
    <property type="match status" value="1"/>
</dbReference>
<dbReference type="PANTHER" id="PTHR17224:SF1">
    <property type="entry name" value="PEPTIDYL-TRNA HYDROLASE"/>
    <property type="match status" value="1"/>
</dbReference>
<dbReference type="Pfam" id="PF01195">
    <property type="entry name" value="Pept_tRNA_hydro"/>
    <property type="match status" value="1"/>
</dbReference>
<dbReference type="SUPFAM" id="SSF53178">
    <property type="entry name" value="Peptidyl-tRNA hydrolase-like"/>
    <property type="match status" value="1"/>
</dbReference>
<dbReference type="PROSITE" id="PS01195">
    <property type="entry name" value="PEPT_TRNA_HYDROL_1"/>
    <property type="match status" value="1"/>
</dbReference>
<dbReference type="PROSITE" id="PS01196">
    <property type="entry name" value="PEPT_TRNA_HYDROL_2"/>
    <property type="match status" value="1"/>
</dbReference>
<reference key="1">
    <citation type="journal article" date="2007" name="Proc. Natl. Acad. Sci. U.S.A.">
        <title>Deep-sea vent epsilon-proteobacterial genomes provide insights into emergence of pathogens.</title>
        <authorList>
            <person name="Nakagawa S."/>
            <person name="Takaki Y."/>
            <person name="Shimamura S."/>
            <person name="Reysenbach A.-L."/>
            <person name="Takai K."/>
            <person name="Horikoshi K."/>
        </authorList>
    </citation>
    <scope>NUCLEOTIDE SEQUENCE [LARGE SCALE GENOMIC DNA]</scope>
    <source>
        <strain>NBC37-1</strain>
    </source>
</reference>
<keyword id="KW-0963">Cytoplasm</keyword>
<keyword id="KW-0378">Hydrolase</keyword>
<keyword id="KW-0694">RNA-binding</keyword>
<keyword id="KW-0820">tRNA-binding</keyword>
<sequence length="189" mass="21290">MTLFVGLGNPGSKYEDTRHNIGFKVIDSLVDDLGARNISKNAFQGELYRIANTLFLKPTTFMNLSGKSIETVKQFFKIELEDIIVIHDDIDLPFGAVRFKRGGGHGGHNGLRSLDAHIGKEYIRVRIGVGKPEHKSQVADYVLHRFSEEEEKEIERLVKHVSNACKALLCEDLNKVKSYYSLKSIEGLE</sequence>
<evidence type="ECO:0000255" key="1">
    <source>
        <dbReference type="HAMAP-Rule" id="MF_00083"/>
    </source>
</evidence>
<accession>A6QBZ2</accession>
<organism>
    <name type="scientific">Sulfurovum sp. (strain NBC37-1)</name>
    <dbReference type="NCBI Taxonomy" id="387093"/>
    <lineage>
        <taxon>Bacteria</taxon>
        <taxon>Pseudomonadati</taxon>
        <taxon>Campylobacterota</taxon>
        <taxon>Epsilonproteobacteria</taxon>
        <taxon>Campylobacterales</taxon>
        <taxon>Sulfurovaceae</taxon>
        <taxon>Sulfurovum</taxon>
    </lineage>
</organism>
<feature type="chain" id="PRO_1000010661" description="Peptidyl-tRNA hydrolase">
    <location>
        <begin position="1"/>
        <end position="189"/>
    </location>
</feature>
<feature type="active site" description="Proton acceptor" evidence="1">
    <location>
        <position position="19"/>
    </location>
</feature>
<feature type="binding site" evidence="1">
    <location>
        <position position="14"/>
    </location>
    <ligand>
        <name>tRNA</name>
        <dbReference type="ChEBI" id="CHEBI:17843"/>
    </ligand>
</feature>
<feature type="binding site" evidence="1">
    <location>
        <position position="61"/>
    </location>
    <ligand>
        <name>tRNA</name>
        <dbReference type="ChEBI" id="CHEBI:17843"/>
    </ligand>
</feature>
<feature type="binding site" evidence="1">
    <location>
        <position position="63"/>
    </location>
    <ligand>
        <name>tRNA</name>
        <dbReference type="ChEBI" id="CHEBI:17843"/>
    </ligand>
</feature>
<feature type="binding site" evidence="1">
    <location>
        <position position="109"/>
    </location>
    <ligand>
        <name>tRNA</name>
        <dbReference type="ChEBI" id="CHEBI:17843"/>
    </ligand>
</feature>
<feature type="site" description="Discriminates between blocked and unblocked aminoacyl-tRNA" evidence="1">
    <location>
        <position position="9"/>
    </location>
</feature>
<feature type="site" description="Stabilizes the basic form of H active site to accept a proton" evidence="1">
    <location>
        <position position="88"/>
    </location>
</feature>
<protein>
    <recommendedName>
        <fullName evidence="1">Peptidyl-tRNA hydrolase</fullName>
        <shortName evidence="1">Pth</shortName>
        <ecNumber evidence="1">3.1.1.29</ecNumber>
    </recommendedName>
</protein>
<proteinExistence type="inferred from homology"/>